<proteinExistence type="inferred from homology"/>
<organism>
    <name type="scientific">Legionella pneumophila (strain Paris)</name>
    <dbReference type="NCBI Taxonomy" id="297246"/>
    <lineage>
        <taxon>Bacteria</taxon>
        <taxon>Pseudomonadati</taxon>
        <taxon>Pseudomonadota</taxon>
        <taxon>Gammaproteobacteria</taxon>
        <taxon>Legionellales</taxon>
        <taxon>Legionellaceae</taxon>
        <taxon>Legionella</taxon>
    </lineage>
</organism>
<feature type="chain" id="PRO_0000231730" description="Imidazole glycerol phosphate synthase subunit HisH 1">
    <location>
        <begin position="1"/>
        <end position="213"/>
    </location>
</feature>
<feature type="domain" description="Glutamine amidotransferase type-1" evidence="1">
    <location>
        <begin position="3"/>
        <end position="213"/>
    </location>
</feature>
<feature type="active site" description="Nucleophile" evidence="1">
    <location>
        <position position="81"/>
    </location>
</feature>
<feature type="active site" evidence="1">
    <location>
        <position position="195"/>
    </location>
</feature>
<feature type="active site" evidence="1">
    <location>
        <position position="197"/>
    </location>
</feature>
<gene>
    <name evidence="1" type="primary">hisH1</name>
    <name type="ordered locus">lpp0816</name>
</gene>
<keyword id="KW-0028">Amino-acid biosynthesis</keyword>
<keyword id="KW-0963">Cytoplasm</keyword>
<keyword id="KW-0315">Glutamine amidotransferase</keyword>
<keyword id="KW-0368">Histidine biosynthesis</keyword>
<keyword id="KW-0378">Hydrolase</keyword>
<keyword id="KW-0456">Lyase</keyword>
<protein>
    <recommendedName>
        <fullName evidence="1">Imidazole glycerol phosphate synthase subunit HisH 1</fullName>
        <ecNumber evidence="1">4.3.2.10</ecNumber>
    </recommendedName>
    <alternativeName>
        <fullName evidence="1">IGP synthase glutaminase subunit 1</fullName>
        <ecNumber evidence="1">3.5.1.2</ecNumber>
    </alternativeName>
    <alternativeName>
        <fullName evidence="1">IGP synthase subunit HisH 1</fullName>
    </alternativeName>
    <alternativeName>
        <fullName evidence="1">ImGP synthase subunit HisH 1</fullName>
        <shortName evidence="1">IGPS subunit HisH 1</shortName>
    </alternativeName>
</protein>
<comment type="function">
    <text evidence="1">IGPS catalyzes the conversion of PRFAR and glutamine to IGP, AICAR and glutamate. The HisH subunit provides the glutamine amidotransferase activity that produces the ammonia necessary to HisF for the synthesis of IGP and AICAR.</text>
</comment>
<comment type="catalytic activity">
    <reaction evidence="1">
        <text>5-[(5-phospho-1-deoxy-D-ribulos-1-ylimino)methylamino]-1-(5-phospho-beta-D-ribosyl)imidazole-4-carboxamide + L-glutamine = D-erythro-1-(imidazol-4-yl)glycerol 3-phosphate + 5-amino-1-(5-phospho-beta-D-ribosyl)imidazole-4-carboxamide + L-glutamate + H(+)</text>
        <dbReference type="Rhea" id="RHEA:24793"/>
        <dbReference type="ChEBI" id="CHEBI:15378"/>
        <dbReference type="ChEBI" id="CHEBI:29985"/>
        <dbReference type="ChEBI" id="CHEBI:58278"/>
        <dbReference type="ChEBI" id="CHEBI:58359"/>
        <dbReference type="ChEBI" id="CHEBI:58475"/>
        <dbReference type="ChEBI" id="CHEBI:58525"/>
        <dbReference type="EC" id="4.3.2.10"/>
    </reaction>
</comment>
<comment type="catalytic activity">
    <reaction evidence="1">
        <text>L-glutamine + H2O = L-glutamate + NH4(+)</text>
        <dbReference type="Rhea" id="RHEA:15889"/>
        <dbReference type="ChEBI" id="CHEBI:15377"/>
        <dbReference type="ChEBI" id="CHEBI:28938"/>
        <dbReference type="ChEBI" id="CHEBI:29985"/>
        <dbReference type="ChEBI" id="CHEBI:58359"/>
        <dbReference type="EC" id="3.5.1.2"/>
    </reaction>
</comment>
<comment type="pathway">
    <text evidence="1">Amino-acid biosynthesis; L-histidine biosynthesis; L-histidine from 5-phospho-alpha-D-ribose 1-diphosphate: step 5/9.</text>
</comment>
<comment type="subunit">
    <text evidence="1">Heterodimer of HisH and HisF.</text>
</comment>
<comment type="subcellular location">
    <subcellularLocation>
        <location evidence="1">Cytoplasm</location>
    </subcellularLocation>
</comment>
<sequence length="213" mass="23310">MSSVSIVDYGVGNLLSVARAFQYFDASVNLVSTPEEIMSADRLVLPGVGAFEDGMKGLTTLNFIEPIKQFARSGKPFLGICLGMQMMLSRSTEFGQHEGLDLIAGEVVSVPSHGVDGQLHKIPHIGWNELVSTSEGEDWCHTILKNIPLNSSVYFVHSFMAMPSNPKKRLADTLYDGQAISAVIKDENMYGCQFHPEKSGEVGLSIIQQFLQI</sequence>
<name>HIS51_LEGPA</name>
<evidence type="ECO:0000255" key="1">
    <source>
        <dbReference type="HAMAP-Rule" id="MF_00278"/>
    </source>
</evidence>
<accession>Q5X6Z7</accession>
<reference key="1">
    <citation type="journal article" date="2004" name="Nat. Genet.">
        <title>Evidence in the Legionella pneumophila genome for exploitation of host cell functions and high genome plasticity.</title>
        <authorList>
            <person name="Cazalet C."/>
            <person name="Rusniok C."/>
            <person name="Brueggemann H."/>
            <person name="Zidane N."/>
            <person name="Magnier A."/>
            <person name="Ma L."/>
            <person name="Tichit M."/>
            <person name="Jarraud S."/>
            <person name="Bouchier C."/>
            <person name="Vandenesch F."/>
            <person name="Kunst F."/>
            <person name="Etienne J."/>
            <person name="Glaser P."/>
            <person name="Buchrieser C."/>
        </authorList>
    </citation>
    <scope>NUCLEOTIDE SEQUENCE [LARGE SCALE GENOMIC DNA]</scope>
    <source>
        <strain>Paris</strain>
    </source>
</reference>
<dbReference type="EC" id="4.3.2.10" evidence="1"/>
<dbReference type="EC" id="3.5.1.2" evidence="1"/>
<dbReference type="EMBL" id="CR628336">
    <property type="protein sequence ID" value="CAH11964.1"/>
    <property type="molecule type" value="Genomic_DNA"/>
</dbReference>
<dbReference type="SMR" id="Q5X6Z7"/>
<dbReference type="KEGG" id="lpp:lpp0816"/>
<dbReference type="LegioList" id="lpp0816"/>
<dbReference type="HOGENOM" id="CLU_071837_2_2_6"/>
<dbReference type="UniPathway" id="UPA00031">
    <property type="reaction ID" value="UER00010"/>
</dbReference>
<dbReference type="GO" id="GO:0005737">
    <property type="term" value="C:cytoplasm"/>
    <property type="evidence" value="ECO:0007669"/>
    <property type="project" value="UniProtKB-SubCell"/>
</dbReference>
<dbReference type="GO" id="GO:0004359">
    <property type="term" value="F:glutaminase activity"/>
    <property type="evidence" value="ECO:0007669"/>
    <property type="project" value="UniProtKB-EC"/>
</dbReference>
<dbReference type="GO" id="GO:0000107">
    <property type="term" value="F:imidazoleglycerol-phosphate synthase activity"/>
    <property type="evidence" value="ECO:0007669"/>
    <property type="project" value="UniProtKB-UniRule"/>
</dbReference>
<dbReference type="GO" id="GO:0016829">
    <property type="term" value="F:lyase activity"/>
    <property type="evidence" value="ECO:0007669"/>
    <property type="project" value="UniProtKB-KW"/>
</dbReference>
<dbReference type="GO" id="GO:0000105">
    <property type="term" value="P:L-histidine biosynthetic process"/>
    <property type="evidence" value="ECO:0007669"/>
    <property type="project" value="UniProtKB-UniRule"/>
</dbReference>
<dbReference type="CDD" id="cd01748">
    <property type="entry name" value="GATase1_IGP_Synthase"/>
    <property type="match status" value="1"/>
</dbReference>
<dbReference type="Gene3D" id="3.40.50.880">
    <property type="match status" value="1"/>
</dbReference>
<dbReference type="HAMAP" id="MF_00278">
    <property type="entry name" value="HisH"/>
    <property type="match status" value="1"/>
</dbReference>
<dbReference type="InterPro" id="IPR029062">
    <property type="entry name" value="Class_I_gatase-like"/>
</dbReference>
<dbReference type="InterPro" id="IPR017926">
    <property type="entry name" value="GATASE"/>
</dbReference>
<dbReference type="InterPro" id="IPR010139">
    <property type="entry name" value="Imidazole-glycPsynth_HisH"/>
</dbReference>
<dbReference type="NCBIfam" id="TIGR01855">
    <property type="entry name" value="IMP_synth_hisH"/>
    <property type="match status" value="1"/>
</dbReference>
<dbReference type="PANTHER" id="PTHR42701">
    <property type="entry name" value="IMIDAZOLE GLYCEROL PHOSPHATE SYNTHASE SUBUNIT HISH"/>
    <property type="match status" value="1"/>
</dbReference>
<dbReference type="PANTHER" id="PTHR42701:SF1">
    <property type="entry name" value="IMIDAZOLE GLYCEROL PHOSPHATE SYNTHASE SUBUNIT HISH"/>
    <property type="match status" value="1"/>
</dbReference>
<dbReference type="Pfam" id="PF00117">
    <property type="entry name" value="GATase"/>
    <property type="match status" value="1"/>
</dbReference>
<dbReference type="PIRSF" id="PIRSF000495">
    <property type="entry name" value="Amidotransf_hisH"/>
    <property type="match status" value="1"/>
</dbReference>
<dbReference type="SUPFAM" id="SSF52317">
    <property type="entry name" value="Class I glutamine amidotransferase-like"/>
    <property type="match status" value="1"/>
</dbReference>
<dbReference type="PROSITE" id="PS51273">
    <property type="entry name" value="GATASE_TYPE_1"/>
    <property type="match status" value="1"/>
</dbReference>